<feature type="chain" id="PRO_0000132499" description="Small ribosomal subunit protein uS4">
    <location>
        <begin position="1"/>
        <end position="208"/>
    </location>
</feature>
<feature type="domain" description="S4 RNA-binding" evidence="1">
    <location>
        <begin position="97"/>
        <end position="158"/>
    </location>
</feature>
<dbReference type="EMBL" id="AE009442">
    <property type="protein sequence ID" value="AAO28339.1"/>
    <property type="molecule type" value="Genomic_DNA"/>
</dbReference>
<dbReference type="RefSeq" id="WP_004090136.1">
    <property type="nucleotide sequence ID" value="NC_004556.1"/>
</dbReference>
<dbReference type="SMR" id="Q87E60"/>
<dbReference type="GeneID" id="93904162"/>
<dbReference type="KEGG" id="xft:PD_0460"/>
<dbReference type="HOGENOM" id="CLU_092403_0_2_6"/>
<dbReference type="Proteomes" id="UP000002516">
    <property type="component" value="Chromosome"/>
</dbReference>
<dbReference type="GO" id="GO:0015935">
    <property type="term" value="C:small ribosomal subunit"/>
    <property type="evidence" value="ECO:0007669"/>
    <property type="project" value="InterPro"/>
</dbReference>
<dbReference type="GO" id="GO:0019843">
    <property type="term" value="F:rRNA binding"/>
    <property type="evidence" value="ECO:0007669"/>
    <property type="project" value="UniProtKB-UniRule"/>
</dbReference>
<dbReference type="GO" id="GO:0003735">
    <property type="term" value="F:structural constituent of ribosome"/>
    <property type="evidence" value="ECO:0007669"/>
    <property type="project" value="InterPro"/>
</dbReference>
<dbReference type="GO" id="GO:0042274">
    <property type="term" value="P:ribosomal small subunit biogenesis"/>
    <property type="evidence" value="ECO:0007669"/>
    <property type="project" value="TreeGrafter"/>
</dbReference>
<dbReference type="GO" id="GO:0006412">
    <property type="term" value="P:translation"/>
    <property type="evidence" value="ECO:0007669"/>
    <property type="project" value="UniProtKB-UniRule"/>
</dbReference>
<dbReference type="CDD" id="cd00165">
    <property type="entry name" value="S4"/>
    <property type="match status" value="1"/>
</dbReference>
<dbReference type="FunFam" id="1.10.1050.10:FF:000001">
    <property type="entry name" value="30S ribosomal protein S4"/>
    <property type="match status" value="1"/>
</dbReference>
<dbReference type="FunFam" id="3.10.290.10:FF:000001">
    <property type="entry name" value="30S ribosomal protein S4"/>
    <property type="match status" value="1"/>
</dbReference>
<dbReference type="Gene3D" id="1.10.1050.10">
    <property type="entry name" value="Ribosomal Protein S4 Delta 41, Chain A, domain 1"/>
    <property type="match status" value="1"/>
</dbReference>
<dbReference type="Gene3D" id="3.10.290.10">
    <property type="entry name" value="RNA-binding S4 domain"/>
    <property type="match status" value="1"/>
</dbReference>
<dbReference type="HAMAP" id="MF_01306_B">
    <property type="entry name" value="Ribosomal_uS4_B"/>
    <property type="match status" value="1"/>
</dbReference>
<dbReference type="InterPro" id="IPR022801">
    <property type="entry name" value="Ribosomal_uS4"/>
</dbReference>
<dbReference type="InterPro" id="IPR005709">
    <property type="entry name" value="Ribosomal_uS4_bac-type"/>
</dbReference>
<dbReference type="InterPro" id="IPR018079">
    <property type="entry name" value="Ribosomal_uS4_CS"/>
</dbReference>
<dbReference type="InterPro" id="IPR001912">
    <property type="entry name" value="Ribosomal_uS4_N"/>
</dbReference>
<dbReference type="InterPro" id="IPR002942">
    <property type="entry name" value="S4_RNA-bd"/>
</dbReference>
<dbReference type="InterPro" id="IPR036986">
    <property type="entry name" value="S4_RNA-bd_sf"/>
</dbReference>
<dbReference type="NCBIfam" id="NF003717">
    <property type="entry name" value="PRK05327.1"/>
    <property type="match status" value="1"/>
</dbReference>
<dbReference type="NCBIfam" id="TIGR01017">
    <property type="entry name" value="rpsD_bact"/>
    <property type="match status" value="1"/>
</dbReference>
<dbReference type="PANTHER" id="PTHR11831">
    <property type="entry name" value="30S 40S RIBOSOMAL PROTEIN"/>
    <property type="match status" value="1"/>
</dbReference>
<dbReference type="PANTHER" id="PTHR11831:SF4">
    <property type="entry name" value="SMALL RIBOSOMAL SUBUNIT PROTEIN US4M"/>
    <property type="match status" value="1"/>
</dbReference>
<dbReference type="Pfam" id="PF00163">
    <property type="entry name" value="Ribosomal_S4"/>
    <property type="match status" value="1"/>
</dbReference>
<dbReference type="Pfam" id="PF01479">
    <property type="entry name" value="S4"/>
    <property type="match status" value="1"/>
</dbReference>
<dbReference type="SMART" id="SM01390">
    <property type="entry name" value="Ribosomal_S4"/>
    <property type="match status" value="1"/>
</dbReference>
<dbReference type="SMART" id="SM00363">
    <property type="entry name" value="S4"/>
    <property type="match status" value="1"/>
</dbReference>
<dbReference type="SUPFAM" id="SSF55174">
    <property type="entry name" value="Alpha-L RNA-binding motif"/>
    <property type="match status" value="1"/>
</dbReference>
<dbReference type="PROSITE" id="PS00632">
    <property type="entry name" value="RIBOSOMAL_S4"/>
    <property type="match status" value="1"/>
</dbReference>
<dbReference type="PROSITE" id="PS50889">
    <property type="entry name" value="S4"/>
    <property type="match status" value="1"/>
</dbReference>
<organism>
    <name type="scientific">Xylella fastidiosa (strain Temecula1 / ATCC 700964)</name>
    <dbReference type="NCBI Taxonomy" id="183190"/>
    <lineage>
        <taxon>Bacteria</taxon>
        <taxon>Pseudomonadati</taxon>
        <taxon>Pseudomonadota</taxon>
        <taxon>Gammaproteobacteria</taxon>
        <taxon>Lysobacterales</taxon>
        <taxon>Lysobacteraceae</taxon>
        <taxon>Xylella</taxon>
    </lineage>
</organism>
<keyword id="KW-1185">Reference proteome</keyword>
<keyword id="KW-0687">Ribonucleoprotein</keyword>
<keyword id="KW-0689">Ribosomal protein</keyword>
<keyword id="KW-0694">RNA-binding</keyword>
<keyword id="KW-0699">rRNA-binding</keyword>
<protein>
    <recommendedName>
        <fullName evidence="1">Small ribosomal subunit protein uS4</fullName>
    </recommendedName>
    <alternativeName>
        <fullName evidence="2">30S ribosomal protein S4</fullName>
    </alternativeName>
</protein>
<accession>Q87E60</accession>
<proteinExistence type="inferred from homology"/>
<reference key="1">
    <citation type="journal article" date="2003" name="J. Bacteriol.">
        <title>Comparative analyses of the complete genome sequences of Pierce's disease and citrus variegated chlorosis strains of Xylella fastidiosa.</title>
        <authorList>
            <person name="Van Sluys M.A."/>
            <person name="de Oliveira M.C."/>
            <person name="Monteiro-Vitorello C.B."/>
            <person name="Miyaki C.Y."/>
            <person name="Furlan L.R."/>
            <person name="Camargo L.E.A."/>
            <person name="da Silva A.C.R."/>
            <person name="Moon D.H."/>
            <person name="Takita M.A."/>
            <person name="Lemos E.G.M."/>
            <person name="Machado M.A."/>
            <person name="Ferro M.I.T."/>
            <person name="da Silva F.R."/>
            <person name="Goldman M.H.S."/>
            <person name="Goldman G.H."/>
            <person name="Lemos M.V.F."/>
            <person name="El-Dorry H."/>
            <person name="Tsai S.M."/>
            <person name="Carrer H."/>
            <person name="Carraro D.M."/>
            <person name="de Oliveira R.C."/>
            <person name="Nunes L.R."/>
            <person name="Siqueira W.J."/>
            <person name="Coutinho L.L."/>
            <person name="Kimura E.T."/>
            <person name="Ferro E.S."/>
            <person name="Harakava R."/>
            <person name="Kuramae E.E."/>
            <person name="Marino C.L."/>
            <person name="Giglioti E."/>
            <person name="Abreu I.L."/>
            <person name="Alves L.M.C."/>
            <person name="do Amaral A.M."/>
            <person name="Baia G.S."/>
            <person name="Blanco S.R."/>
            <person name="Brito M.S."/>
            <person name="Cannavan F.S."/>
            <person name="Celestino A.V."/>
            <person name="da Cunha A.F."/>
            <person name="Fenille R.C."/>
            <person name="Ferro J.A."/>
            <person name="Formighieri E.F."/>
            <person name="Kishi L.T."/>
            <person name="Leoni S.G."/>
            <person name="Oliveira A.R."/>
            <person name="Rosa V.E. Jr."/>
            <person name="Sassaki F.T."/>
            <person name="Sena J.A.D."/>
            <person name="de Souza A.A."/>
            <person name="Truffi D."/>
            <person name="Tsukumo F."/>
            <person name="Yanai G.M."/>
            <person name="Zaros L.G."/>
            <person name="Civerolo E.L."/>
            <person name="Simpson A.J.G."/>
            <person name="Almeida N.F. Jr."/>
            <person name="Setubal J.C."/>
            <person name="Kitajima J.P."/>
        </authorList>
    </citation>
    <scope>NUCLEOTIDE SEQUENCE [LARGE SCALE GENOMIC DNA]</scope>
    <source>
        <strain>Temecula1 / ATCC 700964</strain>
    </source>
</reference>
<evidence type="ECO:0000255" key="1">
    <source>
        <dbReference type="HAMAP-Rule" id="MF_01306"/>
    </source>
</evidence>
<evidence type="ECO:0000305" key="2"/>
<comment type="function">
    <text evidence="1">One of the primary rRNA binding proteins, it binds directly to 16S rRNA where it nucleates assembly of the body of the 30S subunit.</text>
</comment>
<comment type="function">
    <text evidence="1">With S5 and S12 plays an important role in translational accuracy.</text>
</comment>
<comment type="subunit">
    <text evidence="1">Part of the 30S ribosomal subunit. Contacts protein S5. The interaction surface between S4 and S5 is involved in control of translational fidelity.</text>
</comment>
<comment type="similarity">
    <text evidence="1">Belongs to the universal ribosomal protein uS4 family.</text>
</comment>
<gene>
    <name evidence="1" type="primary">rpsD</name>
    <name type="ordered locus">PD_0460</name>
</gene>
<name>RS4_XYLFT</name>
<sequence length="208" mass="23471">MARYIGPSCKLARREGADLSLKSPSRALDSKCKLEQRPGQHGAVRKSKLSDYASQLREKQKVKRIYGVLERQFRNYYKNASTKKGNTGENLLQLLETRLDNVIYRMGFAVTRPAARQLVSHRSVLVNGKMVNLPSYHVKPGDVVALSQRAQKYLCVQESLTIKDQHGSAFSWIEVDSEKFSGVFKALPDRADLPSDINEALIVELYSK</sequence>